<evidence type="ECO:0000250" key="1">
    <source>
        <dbReference type="UniProtKB" id="P38961"/>
    </source>
</evidence>
<evidence type="ECO:0000256" key="2">
    <source>
        <dbReference type="SAM" id="MobiDB-lite"/>
    </source>
</evidence>
<evidence type="ECO:0000305" key="3"/>
<name>RRP8_CHATD</name>
<proteinExistence type="inferred from homology"/>
<protein>
    <recommendedName>
        <fullName>25S rRNA (adenine-N(1))-methyltransferase</fullName>
        <ecNumber>2.1.1.-</ecNumber>
    </recommendedName>
    <alternativeName>
        <fullName>Ribosomal RNA-processing protein 8</fullName>
    </alternativeName>
</protein>
<comment type="function">
    <text evidence="1">S-adenosyl-L-methionine-dependent methyltransferase that specifically methylates the N(1) position of a conserved adenine in helix 25.1 in 25S rRNA. Required both for ribosomal 40S and 60S subunits biogenesis. Required for efficient pre-rRNA cleavage at site A2.</text>
</comment>
<comment type="subcellular location">
    <subcellularLocation>
        <location evidence="1">Nucleus</location>
        <location evidence="1">Nucleolus</location>
    </subcellularLocation>
</comment>
<comment type="similarity">
    <text evidence="3">Belongs to the methyltransferase superfamily. RRP8 family.</text>
</comment>
<comment type="sequence caution" evidence="3">
    <conflict type="frameshift">
        <sequence resource="EMBL-CDS" id="EGS21121"/>
    </conflict>
</comment>
<gene>
    <name type="primary">RPR8</name>
    <name type="ORF">CTHT_0029620</name>
</gene>
<accession>G0S8E7</accession>
<feature type="chain" id="PRO_0000435815" description="25S rRNA (adenine-N(1))-methyltransferase">
    <location>
        <begin position="1"/>
        <end position="586"/>
    </location>
</feature>
<feature type="region of interest" description="Disordered" evidence="2">
    <location>
        <begin position="23"/>
        <end position="229"/>
    </location>
</feature>
<feature type="region of interest" description="Disordered" evidence="2">
    <location>
        <begin position="536"/>
        <end position="573"/>
    </location>
</feature>
<feature type="compositionally biased region" description="Low complexity" evidence="2">
    <location>
        <begin position="25"/>
        <end position="41"/>
    </location>
</feature>
<feature type="compositionally biased region" description="Basic and acidic residues" evidence="2">
    <location>
        <begin position="65"/>
        <end position="83"/>
    </location>
</feature>
<feature type="compositionally biased region" description="Polar residues" evidence="2">
    <location>
        <begin position="99"/>
        <end position="108"/>
    </location>
</feature>
<feature type="compositionally biased region" description="Basic residues" evidence="2">
    <location>
        <begin position="114"/>
        <end position="123"/>
    </location>
</feature>
<feature type="compositionally biased region" description="Acidic residues" evidence="2">
    <location>
        <begin position="144"/>
        <end position="163"/>
    </location>
</feature>
<feature type="compositionally biased region" description="Basic and acidic residues" evidence="2">
    <location>
        <begin position="164"/>
        <end position="182"/>
    </location>
</feature>
<feature type="compositionally biased region" description="Low complexity" evidence="2">
    <location>
        <begin position="183"/>
        <end position="192"/>
    </location>
</feature>
<feature type="compositionally biased region" description="Polar residues" evidence="2">
    <location>
        <begin position="204"/>
        <end position="213"/>
    </location>
</feature>
<feature type="compositionally biased region" description="Low complexity" evidence="2">
    <location>
        <begin position="217"/>
        <end position="229"/>
    </location>
</feature>
<feature type="compositionally biased region" description="Basic and acidic residues" evidence="2">
    <location>
        <begin position="539"/>
        <end position="549"/>
    </location>
</feature>
<feature type="compositionally biased region" description="Basic residues" evidence="2">
    <location>
        <begin position="550"/>
        <end position="559"/>
    </location>
</feature>
<dbReference type="EC" id="2.1.1.-"/>
<dbReference type="EMBL" id="GL988041">
    <property type="protein sequence ID" value="EGS21121.1"/>
    <property type="status" value="ALT_FRAME"/>
    <property type="molecule type" value="Genomic_DNA"/>
</dbReference>
<dbReference type="RefSeq" id="XP_006693417.1">
    <property type="nucleotide sequence ID" value="XM_006693354.1"/>
</dbReference>
<dbReference type="SMR" id="G0S8E7"/>
<dbReference type="STRING" id="759272.G0S8E7"/>
<dbReference type="GeneID" id="18257000"/>
<dbReference type="KEGG" id="cthr:CTHT_0029620"/>
<dbReference type="eggNOG" id="KOG3045">
    <property type="taxonomic scope" value="Eukaryota"/>
</dbReference>
<dbReference type="HOGENOM" id="CLU_027694_3_1_1"/>
<dbReference type="OrthoDB" id="10258825at2759"/>
<dbReference type="Proteomes" id="UP000008066">
    <property type="component" value="Unassembled WGS sequence"/>
</dbReference>
<dbReference type="GO" id="GO:0005730">
    <property type="term" value="C:nucleolus"/>
    <property type="evidence" value="ECO:0007669"/>
    <property type="project" value="UniProtKB-SubCell"/>
</dbReference>
<dbReference type="GO" id="GO:0016433">
    <property type="term" value="F:rRNA (adenine) methyltransferase activity"/>
    <property type="evidence" value="ECO:0007669"/>
    <property type="project" value="TreeGrafter"/>
</dbReference>
<dbReference type="GO" id="GO:0042273">
    <property type="term" value="P:ribosomal large subunit biogenesis"/>
    <property type="evidence" value="ECO:0007669"/>
    <property type="project" value="TreeGrafter"/>
</dbReference>
<dbReference type="CDD" id="cd02440">
    <property type="entry name" value="AdoMet_MTases"/>
    <property type="match status" value="1"/>
</dbReference>
<dbReference type="FunFam" id="1.10.10.2150:FF:000001">
    <property type="entry name" value="Ribosomal RNA-processing protein 8"/>
    <property type="match status" value="1"/>
</dbReference>
<dbReference type="Gene3D" id="1.10.10.2150">
    <property type="entry name" value="Ribosomal RNA-processing protein 8, N-terminal domain"/>
    <property type="match status" value="1"/>
</dbReference>
<dbReference type="Gene3D" id="3.40.50.150">
    <property type="entry name" value="Vaccinia Virus protein VP39"/>
    <property type="match status" value="1"/>
</dbReference>
<dbReference type="InterPro" id="IPR007823">
    <property type="entry name" value="RRP8"/>
</dbReference>
<dbReference type="InterPro" id="IPR042036">
    <property type="entry name" value="RRP8_N"/>
</dbReference>
<dbReference type="InterPro" id="IPR029063">
    <property type="entry name" value="SAM-dependent_MTases_sf"/>
</dbReference>
<dbReference type="PANTHER" id="PTHR12787">
    <property type="entry name" value="RIBOSOMAL RNA-PROCESSING PROTEIN 8"/>
    <property type="match status" value="1"/>
</dbReference>
<dbReference type="PANTHER" id="PTHR12787:SF0">
    <property type="entry name" value="RIBOSOMAL RNA-PROCESSING PROTEIN 8"/>
    <property type="match status" value="1"/>
</dbReference>
<dbReference type="Pfam" id="PF05148">
    <property type="entry name" value="Methyltransf_8"/>
    <property type="match status" value="1"/>
</dbReference>
<dbReference type="SUPFAM" id="SSF53335">
    <property type="entry name" value="S-adenosyl-L-methionine-dependent methyltransferases"/>
    <property type="match status" value="1"/>
</dbReference>
<keyword id="KW-0489">Methyltransferase</keyword>
<keyword id="KW-0539">Nucleus</keyword>
<keyword id="KW-1185">Reference proteome</keyword>
<keyword id="KW-0698">rRNA processing</keyword>
<keyword id="KW-0949">S-adenosyl-L-methionine</keyword>
<keyword id="KW-0808">Transferase</keyword>
<reference key="1">
    <citation type="journal article" date="2011" name="Cell">
        <title>Insight into structure and assembly of the nuclear pore complex by utilizing the genome of a eukaryotic thermophile.</title>
        <authorList>
            <person name="Amlacher S."/>
            <person name="Sarges P."/>
            <person name="Flemming D."/>
            <person name="van Noort V."/>
            <person name="Kunze R."/>
            <person name="Devos D.P."/>
            <person name="Arumugam M."/>
            <person name="Bork P."/>
            <person name="Hurt E."/>
        </authorList>
    </citation>
    <scope>NUCLEOTIDE SEQUENCE [LARGE SCALE GENOMIC DNA]</scope>
    <source>
        <strain>DSM 1495 / CBS 144.50 / IMI 039719</strain>
    </source>
</reference>
<sequence length="586" mass="65664">MFPVKGLSVSADKLKVEPGAIVGTAPAAPAPASAPAVSSSKPSKKRKRHGGDKDVNVDASNLVDLWEKVIEQKKEGVADGVKKHENKRLKKEHEGQGEKLSNSNNDGNQGERKNNKKKNKNKNKNQGEHGIQVAQKKGPKKVEGEEDEDDNNDDADEWEGIDEDEKHASSEKPTPKKDDKKQQQLQQQQQQKKQQKNQEKDNRNGTTSNWQQDKPQPKTATPAPKLTPLQASMREKLISARFRHLNETLYTRPSTEAFKLFEESPEMFTEYHEGFRRQVDVWPENPVDVYIKEIKERAKVRFAPKISGGAEGGKSLPPARFPLPRDQKTKVCTIADLGCGDAKLAKTLVPLKQKLRLEIHSFDLQTGGCELVTRADIANLPLPDNSVDLAIFCLALMGTNWLDFVEEAYRILRWRGELWVAEIKSRFAGSQARVKQPPQKKVVAHSVGKRKKGSALAVAEEEEGDPEQNNLDLAVHVDGDTSKLKKPHETDITAFVEALKRRGFLLNRDFGDNSVDMGNKMFVRMHFVKAAVPTRGKCVPKDGQEDTTKNKKGGQKPKPKFIEEKDEQEEVKDEAAVLKPCVYKIR</sequence>
<organism>
    <name type="scientific">Chaetomium thermophilum (strain DSM 1495 / CBS 144.50 / IMI 039719)</name>
    <name type="common">Thermochaetoides thermophila</name>
    <dbReference type="NCBI Taxonomy" id="759272"/>
    <lineage>
        <taxon>Eukaryota</taxon>
        <taxon>Fungi</taxon>
        <taxon>Dikarya</taxon>
        <taxon>Ascomycota</taxon>
        <taxon>Pezizomycotina</taxon>
        <taxon>Sordariomycetes</taxon>
        <taxon>Sordariomycetidae</taxon>
        <taxon>Sordariales</taxon>
        <taxon>Chaetomiaceae</taxon>
        <taxon>Thermochaetoides</taxon>
    </lineage>
</organism>